<feature type="chain" id="PRO_0000344810" description="Ribonuclease Y">
    <location>
        <begin position="1"/>
        <end position="514"/>
    </location>
</feature>
<feature type="transmembrane region" description="Helical" evidence="1">
    <location>
        <begin position="2"/>
        <end position="22"/>
    </location>
</feature>
<feature type="domain" description="KH" evidence="1">
    <location>
        <begin position="204"/>
        <end position="268"/>
    </location>
</feature>
<feature type="domain" description="HD" evidence="2">
    <location>
        <begin position="330"/>
        <end position="423"/>
    </location>
</feature>
<organism>
    <name type="scientific">Aliarcobacter butzleri (strain RM4018)</name>
    <name type="common">Arcobacter butzleri</name>
    <dbReference type="NCBI Taxonomy" id="367737"/>
    <lineage>
        <taxon>Bacteria</taxon>
        <taxon>Pseudomonadati</taxon>
        <taxon>Campylobacterota</taxon>
        <taxon>Epsilonproteobacteria</taxon>
        <taxon>Campylobacterales</taxon>
        <taxon>Arcobacteraceae</taxon>
        <taxon>Aliarcobacter</taxon>
    </lineage>
</organism>
<reference key="1">
    <citation type="journal article" date="2007" name="PLoS ONE">
        <title>The complete genome sequence and analysis of the Epsilonproteobacterium Arcobacter butzleri.</title>
        <authorList>
            <person name="Miller W.G."/>
            <person name="Parker C.T."/>
            <person name="Rubenfield M."/>
            <person name="Mendz G.L."/>
            <person name="Woesten M.M.S.M."/>
            <person name="Ussery D.W."/>
            <person name="Stolz J.F."/>
            <person name="Binnewies T.T."/>
            <person name="Hallin P.F."/>
            <person name="Wang G."/>
            <person name="Malek J.A."/>
            <person name="Rogosin A."/>
            <person name="Stanker L.H."/>
            <person name="Mandrell R.E."/>
        </authorList>
    </citation>
    <scope>NUCLEOTIDE SEQUENCE [LARGE SCALE GENOMIC DNA]</scope>
    <source>
        <strain>RM4018</strain>
    </source>
</reference>
<comment type="function">
    <text evidence="1">Endoribonuclease that initiates mRNA decay.</text>
</comment>
<comment type="subcellular location">
    <subcellularLocation>
        <location evidence="1">Cell membrane</location>
        <topology evidence="1">Single-pass membrane protein</topology>
    </subcellularLocation>
</comment>
<comment type="similarity">
    <text evidence="1">Belongs to the RNase Y family.</text>
</comment>
<evidence type="ECO:0000255" key="1">
    <source>
        <dbReference type="HAMAP-Rule" id="MF_00335"/>
    </source>
</evidence>
<evidence type="ECO:0000255" key="2">
    <source>
        <dbReference type="PROSITE-ProRule" id="PRU01175"/>
    </source>
</evidence>
<keyword id="KW-1003">Cell membrane</keyword>
<keyword id="KW-0255">Endonuclease</keyword>
<keyword id="KW-0378">Hydrolase</keyword>
<keyword id="KW-0472">Membrane</keyword>
<keyword id="KW-0540">Nuclease</keyword>
<keyword id="KW-1185">Reference proteome</keyword>
<keyword id="KW-0694">RNA-binding</keyword>
<keyword id="KW-0812">Transmembrane</keyword>
<keyword id="KW-1133">Transmembrane helix</keyword>
<sequence length="514" mass="57782">MEDLIVAIVVGAFSSAISIFVVRKLDRAKFEVFIEQAKAKAKVIEHEAEMALKDAQLKAKIECDREFKSAKREYEAMLLKIERKERELNEHLESELKAIKLEKEQIVEKNRKITTLKDGLEEQKKTYEEKTLEAIKILENACGLTQSEAKELMLKKVKEDSRAEISSIFRKRYKIAEQNTKNEINNMLSQAVTRYAGEFAAERLINNIPLNDEETKGKIIGKEGRNIKALEMLLGVDIIIDDTPNTITVSSFNLYRRAVATKTIRELLEDGRIQPARIEEIYKKVKSEFDKNIQKEGEDVVMELGIKTMHPELIKLVGRLRYRASYGQNALAHTLEVAHLSGLLASQMGGDAILARRAGLLHDIGKALTHEAPGSHVDLGAEICKRYDECDTVINAIYAHHGHEEPINVESAAVCAADALSAARPGARREVLESFLKRVEEVENISTSKLGVLNAYAINAGREVRVIVKAELVNDDEAVLLATEIAKEIEEKVQYPGEIKVNVIRETRAESYAR</sequence>
<protein>
    <recommendedName>
        <fullName evidence="1">Ribonuclease Y</fullName>
        <shortName evidence="1">RNase Y</shortName>
        <ecNumber evidence="1">3.1.-.-</ecNumber>
    </recommendedName>
</protein>
<proteinExistence type="inferred from homology"/>
<dbReference type="EC" id="3.1.-.-" evidence="1"/>
<dbReference type="EMBL" id="CP000361">
    <property type="protein sequence ID" value="ABV67152.1"/>
    <property type="molecule type" value="Genomic_DNA"/>
</dbReference>
<dbReference type="RefSeq" id="WP_004509074.1">
    <property type="nucleotide sequence ID" value="NC_009850.1"/>
</dbReference>
<dbReference type="SMR" id="A8ET78"/>
<dbReference type="STRING" id="367737.Abu_0892"/>
<dbReference type="GeneID" id="24305651"/>
<dbReference type="KEGG" id="abu:Abu_0892"/>
<dbReference type="eggNOG" id="COG1418">
    <property type="taxonomic scope" value="Bacteria"/>
</dbReference>
<dbReference type="HOGENOM" id="CLU_028328_1_0_7"/>
<dbReference type="Proteomes" id="UP000001136">
    <property type="component" value="Chromosome"/>
</dbReference>
<dbReference type="GO" id="GO:0005886">
    <property type="term" value="C:plasma membrane"/>
    <property type="evidence" value="ECO:0007669"/>
    <property type="project" value="UniProtKB-SubCell"/>
</dbReference>
<dbReference type="GO" id="GO:0003723">
    <property type="term" value="F:RNA binding"/>
    <property type="evidence" value="ECO:0007669"/>
    <property type="project" value="UniProtKB-UniRule"/>
</dbReference>
<dbReference type="GO" id="GO:0004521">
    <property type="term" value="F:RNA endonuclease activity"/>
    <property type="evidence" value="ECO:0007669"/>
    <property type="project" value="UniProtKB-UniRule"/>
</dbReference>
<dbReference type="GO" id="GO:0006402">
    <property type="term" value="P:mRNA catabolic process"/>
    <property type="evidence" value="ECO:0007669"/>
    <property type="project" value="UniProtKB-UniRule"/>
</dbReference>
<dbReference type="CDD" id="cd00077">
    <property type="entry name" value="HDc"/>
    <property type="match status" value="1"/>
</dbReference>
<dbReference type="CDD" id="cd22431">
    <property type="entry name" value="KH-I_RNaseY"/>
    <property type="match status" value="1"/>
</dbReference>
<dbReference type="Gene3D" id="1.10.3210.10">
    <property type="entry name" value="Hypothetical protein af1432"/>
    <property type="match status" value="1"/>
</dbReference>
<dbReference type="HAMAP" id="MF_00335">
    <property type="entry name" value="RNase_Y"/>
    <property type="match status" value="1"/>
</dbReference>
<dbReference type="InterPro" id="IPR003607">
    <property type="entry name" value="HD/PDEase_dom"/>
</dbReference>
<dbReference type="InterPro" id="IPR006674">
    <property type="entry name" value="HD_domain"/>
</dbReference>
<dbReference type="InterPro" id="IPR006675">
    <property type="entry name" value="HDIG_dom"/>
</dbReference>
<dbReference type="InterPro" id="IPR004087">
    <property type="entry name" value="KH_dom"/>
</dbReference>
<dbReference type="InterPro" id="IPR004088">
    <property type="entry name" value="KH_dom_type_1"/>
</dbReference>
<dbReference type="InterPro" id="IPR036612">
    <property type="entry name" value="KH_dom_type_1_sf"/>
</dbReference>
<dbReference type="InterPro" id="IPR017705">
    <property type="entry name" value="Ribonuclease_Y"/>
</dbReference>
<dbReference type="InterPro" id="IPR022711">
    <property type="entry name" value="RNase_Y_N"/>
</dbReference>
<dbReference type="NCBIfam" id="TIGR00277">
    <property type="entry name" value="HDIG"/>
    <property type="match status" value="1"/>
</dbReference>
<dbReference type="NCBIfam" id="TIGR03319">
    <property type="entry name" value="RNase_Y"/>
    <property type="match status" value="1"/>
</dbReference>
<dbReference type="PANTHER" id="PTHR12826">
    <property type="entry name" value="RIBONUCLEASE Y"/>
    <property type="match status" value="1"/>
</dbReference>
<dbReference type="PANTHER" id="PTHR12826:SF15">
    <property type="entry name" value="RIBONUCLEASE Y"/>
    <property type="match status" value="1"/>
</dbReference>
<dbReference type="Pfam" id="PF01966">
    <property type="entry name" value="HD"/>
    <property type="match status" value="1"/>
</dbReference>
<dbReference type="Pfam" id="PF00013">
    <property type="entry name" value="KH_1"/>
    <property type="match status" value="1"/>
</dbReference>
<dbReference type="Pfam" id="PF12072">
    <property type="entry name" value="RNase_Y_N"/>
    <property type="match status" value="1"/>
</dbReference>
<dbReference type="SMART" id="SM00471">
    <property type="entry name" value="HDc"/>
    <property type="match status" value="1"/>
</dbReference>
<dbReference type="SMART" id="SM00322">
    <property type="entry name" value="KH"/>
    <property type="match status" value="1"/>
</dbReference>
<dbReference type="SUPFAM" id="SSF54791">
    <property type="entry name" value="Eukaryotic type KH-domain (KH-domain type I)"/>
    <property type="match status" value="1"/>
</dbReference>
<dbReference type="SUPFAM" id="SSF109604">
    <property type="entry name" value="HD-domain/PDEase-like"/>
    <property type="match status" value="1"/>
</dbReference>
<dbReference type="PROSITE" id="PS51831">
    <property type="entry name" value="HD"/>
    <property type="match status" value="1"/>
</dbReference>
<dbReference type="PROSITE" id="PS50084">
    <property type="entry name" value="KH_TYPE_1"/>
    <property type="match status" value="1"/>
</dbReference>
<name>RNY_ALIB4</name>
<gene>
    <name evidence="1" type="primary">rny</name>
    <name type="ordered locus">Abu_0892</name>
</gene>
<accession>A8ET78</accession>